<proteinExistence type="inferred from homology"/>
<dbReference type="EMBL" id="AL596165">
    <property type="protein sequence ID" value="CAC95769.1"/>
    <property type="molecule type" value="Genomic_DNA"/>
</dbReference>
<dbReference type="PIR" id="AI1499">
    <property type="entry name" value="AI1499"/>
</dbReference>
<dbReference type="RefSeq" id="WP_003760632.1">
    <property type="nucleotide sequence ID" value="NC_003212.1"/>
</dbReference>
<dbReference type="SMR" id="Q92EC3"/>
<dbReference type="STRING" id="272626.gene:17564863"/>
<dbReference type="KEGG" id="lin:lin0537"/>
<dbReference type="eggNOG" id="COG3830">
    <property type="taxonomic scope" value="Bacteria"/>
</dbReference>
<dbReference type="HOGENOM" id="CLU_155669_2_0_9"/>
<dbReference type="OrthoDB" id="9803078at2"/>
<dbReference type="Proteomes" id="UP000002513">
    <property type="component" value="Chromosome"/>
</dbReference>
<dbReference type="CDD" id="cd04872">
    <property type="entry name" value="ACT_1ZPV"/>
    <property type="match status" value="1"/>
</dbReference>
<dbReference type="FunFam" id="3.30.70.260:FF:000032">
    <property type="entry name" value="UPF0237 protein SP_0238"/>
    <property type="match status" value="1"/>
</dbReference>
<dbReference type="Gene3D" id="3.30.70.260">
    <property type="match status" value="1"/>
</dbReference>
<dbReference type="HAMAP" id="MF_01054">
    <property type="entry name" value="UPF0237"/>
    <property type="match status" value="1"/>
</dbReference>
<dbReference type="InterPro" id="IPR045865">
    <property type="entry name" value="ACT-like_dom_sf"/>
</dbReference>
<dbReference type="InterPro" id="IPR002912">
    <property type="entry name" value="ACT_dom"/>
</dbReference>
<dbReference type="InterPro" id="IPR050990">
    <property type="entry name" value="UPF0237/GcvR_regulator"/>
</dbReference>
<dbReference type="InterPro" id="IPR022986">
    <property type="entry name" value="UPF0237_ACT"/>
</dbReference>
<dbReference type="NCBIfam" id="NF001220">
    <property type="entry name" value="PRK00194.1"/>
    <property type="match status" value="1"/>
</dbReference>
<dbReference type="PANTHER" id="PTHR34875">
    <property type="entry name" value="UPF0237 PROTEIN MJ1558"/>
    <property type="match status" value="1"/>
</dbReference>
<dbReference type="PANTHER" id="PTHR34875:SF6">
    <property type="entry name" value="UPF0237 PROTEIN MJ1558"/>
    <property type="match status" value="1"/>
</dbReference>
<dbReference type="Pfam" id="PF13740">
    <property type="entry name" value="ACT_6"/>
    <property type="match status" value="1"/>
</dbReference>
<dbReference type="SUPFAM" id="SSF55021">
    <property type="entry name" value="ACT-like"/>
    <property type="match status" value="1"/>
</dbReference>
<dbReference type="PROSITE" id="PS51671">
    <property type="entry name" value="ACT"/>
    <property type="match status" value="1"/>
</dbReference>
<feature type="chain" id="PRO_0000219901" description="UPF0237 protein lin0537">
    <location>
        <begin position="1"/>
        <end position="89"/>
    </location>
</feature>
<feature type="domain" description="ACT" evidence="1">
    <location>
        <begin position="4"/>
        <end position="78"/>
    </location>
</feature>
<protein>
    <recommendedName>
        <fullName evidence="1">UPF0237 protein lin0537</fullName>
    </recommendedName>
</protein>
<name>Y537_LISIN</name>
<comment type="similarity">
    <text evidence="1">Belongs to the UPF0237 family.</text>
</comment>
<organism>
    <name type="scientific">Listeria innocua serovar 6a (strain ATCC BAA-680 / CLIP 11262)</name>
    <dbReference type="NCBI Taxonomy" id="272626"/>
    <lineage>
        <taxon>Bacteria</taxon>
        <taxon>Bacillati</taxon>
        <taxon>Bacillota</taxon>
        <taxon>Bacilli</taxon>
        <taxon>Bacillales</taxon>
        <taxon>Listeriaceae</taxon>
        <taxon>Listeria</taxon>
    </lineage>
</organism>
<reference key="1">
    <citation type="journal article" date="2001" name="Science">
        <title>Comparative genomics of Listeria species.</title>
        <authorList>
            <person name="Glaser P."/>
            <person name="Frangeul L."/>
            <person name="Buchrieser C."/>
            <person name="Rusniok C."/>
            <person name="Amend A."/>
            <person name="Baquero F."/>
            <person name="Berche P."/>
            <person name="Bloecker H."/>
            <person name="Brandt P."/>
            <person name="Chakraborty T."/>
            <person name="Charbit A."/>
            <person name="Chetouani F."/>
            <person name="Couve E."/>
            <person name="de Daruvar A."/>
            <person name="Dehoux P."/>
            <person name="Domann E."/>
            <person name="Dominguez-Bernal G."/>
            <person name="Duchaud E."/>
            <person name="Durant L."/>
            <person name="Dussurget O."/>
            <person name="Entian K.-D."/>
            <person name="Fsihi H."/>
            <person name="Garcia-del Portillo F."/>
            <person name="Garrido P."/>
            <person name="Gautier L."/>
            <person name="Goebel W."/>
            <person name="Gomez-Lopez N."/>
            <person name="Hain T."/>
            <person name="Hauf J."/>
            <person name="Jackson D."/>
            <person name="Jones L.-M."/>
            <person name="Kaerst U."/>
            <person name="Kreft J."/>
            <person name="Kuhn M."/>
            <person name="Kunst F."/>
            <person name="Kurapkat G."/>
            <person name="Madueno E."/>
            <person name="Maitournam A."/>
            <person name="Mata Vicente J."/>
            <person name="Ng E."/>
            <person name="Nedjari H."/>
            <person name="Nordsiek G."/>
            <person name="Novella S."/>
            <person name="de Pablos B."/>
            <person name="Perez-Diaz J.-C."/>
            <person name="Purcell R."/>
            <person name="Remmel B."/>
            <person name="Rose M."/>
            <person name="Schlueter T."/>
            <person name="Simoes N."/>
            <person name="Tierrez A."/>
            <person name="Vazquez-Boland J.-A."/>
            <person name="Voss H."/>
            <person name="Wehland J."/>
            <person name="Cossart P."/>
        </authorList>
    </citation>
    <scope>NUCLEOTIDE SEQUENCE [LARGE SCALE GENOMIC DNA]</scope>
    <source>
        <strain>ATCC BAA-680 / CLIP 11262</strain>
    </source>
</reference>
<accession>Q92EC3</accession>
<sequence>MRAVLTVIGKDNVGIVAGVSNKLAELNINIVDVSQTIMDGYFTMMMMCDISQITKEFDEVKTELTGKGEELQVKIHIQREEIFNAMHKL</sequence>
<gene>
    <name type="ordered locus">lin0537</name>
</gene>
<evidence type="ECO:0000255" key="1">
    <source>
        <dbReference type="HAMAP-Rule" id="MF_01054"/>
    </source>
</evidence>